<accession>Q5FA25</accession>
<feature type="chain" id="PRO_0000242192" description="Peptide chain release factor 3">
    <location>
        <begin position="1"/>
        <end position="531"/>
    </location>
</feature>
<feature type="domain" description="tr-type G">
    <location>
        <begin position="10"/>
        <end position="278"/>
    </location>
</feature>
<feature type="binding site" evidence="1">
    <location>
        <begin position="19"/>
        <end position="26"/>
    </location>
    <ligand>
        <name>GTP</name>
        <dbReference type="ChEBI" id="CHEBI:37565"/>
    </ligand>
</feature>
<feature type="binding site" evidence="1">
    <location>
        <begin position="87"/>
        <end position="91"/>
    </location>
    <ligand>
        <name>GTP</name>
        <dbReference type="ChEBI" id="CHEBI:37565"/>
    </ligand>
</feature>
<feature type="binding site" evidence="1">
    <location>
        <begin position="141"/>
        <end position="144"/>
    </location>
    <ligand>
        <name>GTP</name>
        <dbReference type="ChEBI" id="CHEBI:37565"/>
    </ligand>
</feature>
<name>RF3_NEIG1</name>
<comment type="function">
    <text evidence="1">Increases the formation of ribosomal termination complexes and stimulates activities of RF-1 and RF-2. It binds guanine nucleotides and has strong preference for UGA stop codons. It may interact directly with the ribosome. The stimulation of RF-1 and RF-2 is significantly reduced by GTP and GDP, but not by GMP.</text>
</comment>
<comment type="subcellular location">
    <subcellularLocation>
        <location evidence="1">Cytoplasm</location>
    </subcellularLocation>
</comment>
<comment type="similarity">
    <text evidence="1">Belongs to the TRAFAC class translation factor GTPase superfamily. Classic translation factor GTPase family. PrfC subfamily.</text>
</comment>
<keyword id="KW-0963">Cytoplasm</keyword>
<keyword id="KW-0342">GTP-binding</keyword>
<keyword id="KW-0547">Nucleotide-binding</keyword>
<keyword id="KW-0648">Protein biosynthesis</keyword>
<keyword id="KW-1185">Reference proteome</keyword>
<protein>
    <recommendedName>
        <fullName evidence="1">Peptide chain release factor 3</fullName>
        <shortName evidence="1">RF-3</shortName>
    </recommendedName>
</protein>
<reference key="1">
    <citation type="submission" date="2003-03" db="EMBL/GenBank/DDBJ databases">
        <title>The complete genome sequence of Neisseria gonorrhoeae.</title>
        <authorList>
            <person name="Lewis L.A."/>
            <person name="Gillaspy A.F."/>
            <person name="McLaughlin R.E."/>
            <person name="Gipson M."/>
            <person name="Ducey T.F."/>
            <person name="Ownbey T."/>
            <person name="Hartman K."/>
            <person name="Nydick C."/>
            <person name="Carson M.B."/>
            <person name="Vaughn J."/>
            <person name="Thomson C."/>
            <person name="Song L."/>
            <person name="Lin S."/>
            <person name="Yuan X."/>
            <person name="Najar F."/>
            <person name="Zhan M."/>
            <person name="Ren Q."/>
            <person name="Zhu H."/>
            <person name="Qi S."/>
            <person name="Kenton S.M."/>
            <person name="Lai H."/>
            <person name="White J.D."/>
            <person name="Clifton S."/>
            <person name="Roe B.A."/>
            <person name="Dyer D.W."/>
        </authorList>
    </citation>
    <scope>NUCLEOTIDE SEQUENCE [LARGE SCALE GENOMIC DNA]</scope>
    <source>
        <strain>ATCC 700825 / FA 1090</strain>
    </source>
</reference>
<organism>
    <name type="scientific">Neisseria gonorrhoeae (strain ATCC 700825 / FA 1090)</name>
    <dbReference type="NCBI Taxonomy" id="242231"/>
    <lineage>
        <taxon>Bacteria</taxon>
        <taxon>Pseudomonadati</taxon>
        <taxon>Pseudomonadota</taxon>
        <taxon>Betaproteobacteria</taxon>
        <taxon>Neisseriales</taxon>
        <taxon>Neisseriaceae</taxon>
        <taxon>Neisseria</taxon>
    </lineage>
</organism>
<gene>
    <name evidence="1" type="primary">prfC</name>
    <name type="ordered locus">NGO_0209</name>
</gene>
<dbReference type="EMBL" id="AE004969">
    <property type="protein sequence ID" value="AAW88962.1"/>
    <property type="molecule type" value="Genomic_DNA"/>
</dbReference>
<dbReference type="RefSeq" id="WP_003704835.1">
    <property type="nucleotide sequence ID" value="NC_002946.2"/>
</dbReference>
<dbReference type="RefSeq" id="YP_207374.1">
    <property type="nucleotide sequence ID" value="NC_002946.2"/>
</dbReference>
<dbReference type="SMR" id="Q5FA25"/>
<dbReference type="STRING" id="242231.NGO_0209"/>
<dbReference type="KEGG" id="ngo:NGO_0209"/>
<dbReference type="PATRIC" id="fig|242231.10.peg.260"/>
<dbReference type="HOGENOM" id="CLU_002794_2_1_4"/>
<dbReference type="Proteomes" id="UP000000535">
    <property type="component" value="Chromosome"/>
</dbReference>
<dbReference type="GO" id="GO:0005829">
    <property type="term" value="C:cytosol"/>
    <property type="evidence" value="ECO:0007669"/>
    <property type="project" value="TreeGrafter"/>
</dbReference>
<dbReference type="GO" id="GO:0005525">
    <property type="term" value="F:GTP binding"/>
    <property type="evidence" value="ECO:0007669"/>
    <property type="project" value="UniProtKB-UniRule"/>
</dbReference>
<dbReference type="GO" id="GO:0003924">
    <property type="term" value="F:GTPase activity"/>
    <property type="evidence" value="ECO:0007669"/>
    <property type="project" value="InterPro"/>
</dbReference>
<dbReference type="GO" id="GO:0016150">
    <property type="term" value="F:translation release factor activity, codon nonspecific"/>
    <property type="evidence" value="ECO:0007669"/>
    <property type="project" value="TreeGrafter"/>
</dbReference>
<dbReference type="GO" id="GO:0016149">
    <property type="term" value="F:translation release factor activity, codon specific"/>
    <property type="evidence" value="ECO:0007669"/>
    <property type="project" value="UniProtKB-UniRule"/>
</dbReference>
<dbReference type="GO" id="GO:0006449">
    <property type="term" value="P:regulation of translational termination"/>
    <property type="evidence" value="ECO:0007669"/>
    <property type="project" value="UniProtKB-UniRule"/>
</dbReference>
<dbReference type="CDD" id="cd04169">
    <property type="entry name" value="RF3"/>
    <property type="match status" value="1"/>
</dbReference>
<dbReference type="CDD" id="cd03689">
    <property type="entry name" value="RF3_II"/>
    <property type="match status" value="1"/>
</dbReference>
<dbReference type="CDD" id="cd16259">
    <property type="entry name" value="RF3_III"/>
    <property type="match status" value="1"/>
</dbReference>
<dbReference type="FunFam" id="2.40.30.10:FF:000040">
    <property type="entry name" value="Peptide chain release factor 3"/>
    <property type="match status" value="1"/>
</dbReference>
<dbReference type="FunFam" id="3.30.70.3280:FF:000001">
    <property type="entry name" value="Peptide chain release factor 3"/>
    <property type="match status" value="1"/>
</dbReference>
<dbReference type="FunFam" id="3.40.50.300:FF:000542">
    <property type="entry name" value="Peptide chain release factor 3"/>
    <property type="match status" value="1"/>
</dbReference>
<dbReference type="Gene3D" id="3.40.50.300">
    <property type="entry name" value="P-loop containing nucleotide triphosphate hydrolases"/>
    <property type="match status" value="2"/>
</dbReference>
<dbReference type="Gene3D" id="3.30.70.3280">
    <property type="entry name" value="Peptide chain release factor 3, domain III"/>
    <property type="match status" value="1"/>
</dbReference>
<dbReference type="HAMAP" id="MF_00072">
    <property type="entry name" value="Rel_fac_3"/>
    <property type="match status" value="1"/>
</dbReference>
<dbReference type="InterPro" id="IPR053905">
    <property type="entry name" value="EF-G-like_DII"/>
</dbReference>
<dbReference type="InterPro" id="IPR035647">
    <property type="entry name" value="EFG_III/V"/>
</dbReference>
<dbReference type="InterPro" id="IPR031157">
    <property type="entry name" value="G_TR_CS"/>
</dbReference>
<dbReference type="InterPro" id="IPR027417">
    <property type="entry name" value="P-loop_NTPase"/>
</dbReference>
<dbReference type="InterPro" id="IPR004548">
    <property type="entry name" value="PrfC"/>
</dbReference>
<dbReference type="InterPro" id="IPR032090">
    <property type="entry name" value="RF3_C"/>
</dbReference>
<dbReference type="InterPro" id="IPR038467">
    <property type="entry name" value="RF3_dom_3_sf"/>
</dbReference>
<dbReference type="InterPro" id="IPR041732">
    <property type="entry name" value="RF3_GTP-bd"/>
</dbReference>
<dbReference type="InterPro" id="IPR005225">
    <property type="entry name" value="Small_GTP-bd"/>
</dbReference>
<dbReference type="InterPro" id="IPR000795">
    <property type="entry name" value="T_Tr_GTP-bd_dom"/>
</dbReference>
<dbReference type="InterPro" id="IPR009000">
    <property type="entry name" value="Transl_B-barrel_sf"/>
</dbReference>
<dbReference type="NCBIfam" id="TIGR00503">
    <property type="entry name" value="prfC"/>
    <property type="match status" value="1"/>
</dbReference>
<dbReference type="NCBIfam" id="NF001964">
    <property type="entry name" value="PRK00741.1"/>
    <property type="match status" value="1"/>
</dbReference>
<dbReference type="NCBIfam" id="TIGR00231">
    <property type="entry name" value="small_GTP"/>
    <property type="match status" value="1"/>
</dbReference>
<dbReference type="PANTHER" id="PTHR43556">
    <property type="entry name" value="PEPTIDE CHAIN RELEASE FACTOR RF3"/>
    <property type="match status" value="1"/>
</dbReference>
<dbReference type="PANTHER" id="PTHR43556:SF2">
    <property type="entry name" value="PEPTIDE CHAIN RELEASE FACTOR RF3"/>
    <property type="match status" value="1"/>
</dbReference>
<dbReference type="Pfam" id="PF22042">
    <property type="entry name" value="EF-G_D2"/>
    <property type="match status" value="1"/>
</dbReference>
<dbReference type="Pfam" id="PF00009">
    <property type="entry name" value="GTP_EFTU"/>
    <property type="match status" value="1"/>
</dbReference>
<dbReference type="Pfam" id="PF16658">
    <property type="entry name" value="RF3_C"/>
    <property type="match status" value="1"/>
</dbReference>
<dbReference type="PRINTS" id="PR00315">
    <property type="entry name" value="ELONGATNFCT"/>
</dbReference>
<dbReference type="SUPFAM" id="SSF54980">
    <property type="entry name" value="EF-G C-terminal domain-like"/>
    <property type="match status" value="1"/>
</dbReference>
<dbReference type="SUPFAM" id="SSF52540">
    <property type="entry name" value="P-loop containing nucleoside triphosphate hydrolases"/>
    <property type="match status" value="1"/>
</dbReference>
<dbReference type="SUPFAM" id="SSF50447">
    <property type="entry name" value="Translation proteins"/>
    <property type="match status" value="1"/>
</dbReference>
<dbReference type="PROSITE" id="PS00301">
    <property type="entry name" value="G_TR_1"/>
    <property type="match status" value="1"/>
</dbReference>
<dbReference type="PROSITE" id="PS51722">
    <property type="entry name" value="G_TR_2"/>
    <property type="match status" value="1"/>
</dbReference>
<evidence type="ECO:0000255" key="1">
    <source>
        <dbReference type="HAMAP-Rule" id="MF_00072"/>
    </source>
</evidence>
<proteinExistence type="inferred from homology"/>
<sequence length="531" mass="59506">MSQEILDQVRRRRTFAIISHPDAGKTTLTEKLLLFSGAIQSAGTVKGKKTGKFATSDWMDIEKQRGISVASSVMQFDYKDHTVNLLDTPGHQDFSEDTYRVLTAVDSALMVIDAAKGVEAQTIKLLNVCRLRDTPIVTFMNKYDREVRDSLELLDEVEDILQIRCAPVTWPIGMGKNFKGVYHILNDEIYLFEAGGERLPHEFDIIKGINNPELEQRFPLEIQQLRDEIELVQAASNEFNLDEFLAGELTPVFFGSAINNFGIQEILNSLIDWAPAPKPRDATMRMVGPDEPKFSGFIFKIQANMDPKHRDRIAFLRVCSGKFERGMKMKHLRINREIAASSVVTFMSHDRELAEEAYAGDIIGIPNHGNIQIGDSFSEGEQLAFTGIPFFAPELFRSVRIKNPLKIKQLQKGLQQLGEEGAVQVFKPMSGADLILGAVGVLQFEVVTSRLANEYGVEAVFDSASIWSARWVSCDDKKKLAEFEKANAGNLAIDAGGNLAYLAPNRVNLGLTQERWPDIVFHETREHSVKL</sequence>